<feature type="chain" id="PRO_0000149527" description="RNA-directed RNA polymerase">
    <location>
        <begin position="1"/>
        <end position="1082"/>
    </location>
</feature>
<feature type="domain" description="RdRp catalytic" evidence="2">
    <location>
        <begin position="498"/>
        <end position="670"/>
    </location>
</feature>
<evidence type="ECO:0000250" key="1"/>
<evidence type="ECO:0000255" key="2">
    <source>
        <dbReference type="PROSITE-ProRule" id="PRU00539"/>
    </source>
</evidence>
<evidence type="ECO:0000305" key="3"/>
<keyword id="KW-0460">Magnesium</keyword>
<keyword id="KW-0547">Nucleotide-binding</keyword>
<keyword id="KW-0548">Nucleotidyltransferase</keyword>
<keyword id="KW-0694">RNA-binding</keyword>
<keyword id="KW-0696">RNA-directed RNA polymerase</keyword>
<keyword id="KW-0808">Transferase</keyword>
<keyword id="KW-0693">Viral RNA replication</keyword>
<keyword id="KW-0946">Virion</keyword>
<protein>
    <recommendedName>
        <fullName>RNA-directed RNA polymerase</fullName>
        <ecNumber>2.7.7.48</ecNumber>
    </recommendedName>
    <alternativeName>
        <fullName>Protein VP1</fullName>
    </alternativeName>
</protein>
<comment type="function">
    <text evidence="2">RNA-directed RNA polymerase that is involved in both transcription and genome replication. Together with VP3 capping enzyme, forms an enzyme complex positioned near the channels situated at each of the five-fold vertices of the core. Following infection, the outermost layer of the virus is lost, leaving a double-layered particle (DLP) made up of the core and VP6 shell. VP1 then catalyzes the transcription of fully conservative plus-strand genomic RNAs that are extruded through the DLP's channels into the cytoplasm where they function as mRNAs for translation of viral proteins. One copy of each of the viral (+)RNAs is also recruited during core assembly, together with newly synthesized polymerase complexes and VP2. The polymerase of these novo-formed particles catalyzes the synthesis of complementary minus-strands leading to dsDNA formation. To do so, the polymerase specifically recognizes conserved 3' sequence(s) in plus-strand RNA templates. Once dsRNA synthesis is complete, the polymerase switches to the transcriptional mode, thus providing secondary transcription (By similarity).</text>
</comment>
<comment type="catalytic activity">
    <reaction evidence="2">
        <text>RNA(n) + a ribonucleoside 5'-triphosphate = RNA(n+1) + diphosphate</text>
        <dbReference type="Rhea" id="RHEA:21248"/>
        <dbReference type="Rhea" id="RHEA-COMP:14527"/>
        <dbReference type="Rhea" id="RHEA-COMP:17342"/>
        <dbReference type="ChEBI" id="CHEBI:33019"/>
        <dbReference type="ChEBI" id="CHEBI:61557"/>
        <dbReference type="ChEBI" id="CHEBI:140395"/>
        <dbReference type="EC" id="2.7.7.48"/>
    </reaction>
</comment>
<comment type="cofactor">
    <cofactor evidence="3">
        <name>Mg(2+)</name>
        <dbReference type="ChEBI" id="CHEBI:18420"/>
    </cofactor>
</comment>
<comment type="subunit">
    <text evidence="1 3">Interacts with VP3 (Potential). Interacts with VP2; this interaction activates VP1. Interacts with NSP5; this interaction is probably necessary for the formation of functional virus factories. Interacts with NSP2; this interaction is weak (By similarity).</text>
</comment>
<comment type="subcellular location">
    <subcellularLocation>
        <location evidence="3">Virion</location>
    </subcellularLocation>
    <text evidence="1">Attached inside the inner capsid as a minor component. Also found in spherical cytoplasmic structures, called virus factories, that appear early after infection and are the site of viral replication and packaging (By similarity).</text>
</comment>
<comment type="similarity">
    <text evidence="3">Belongs to the reoviridae RNA-directed RNA polymerase family.</text>
</comment>
<accession>P26190</accession>
<dbReference type="EC" id="2.7.7.48"/>
<dbReference type="EMBL" id="M74216">
    <property type="protein sequence ID" value="AAB00801.1"/>
    <property type="molecule type" value="Genomic_DNA"/>
</dbReference>
<dbReference type="PIR" id="A40822">
    <property type="entry name" value="P1XRPC"/>
</dbReference>
<dbReference type="SMR" id="P26190"/>
<dbReference type="Proteomes" id="UP000008175">
    <property type="component" value="Genome"/>
</dbReference>
<dbReference type="GO" id="GO:0044423">
    <property type="term" value="C:virion component"/>
    <property type="evidence" value="ECO:0007669"/>
    <property type="project" value="UniProtKB-KW"/>
</dbReference>
<dbReference type="GO" id="GO:0000166">
    <property type="term" value="F:nucleotide binding"/>
    <property type="evidence" value="ECO:0007669"/>
    <property type="project" value="UniProtKB-KW"/>
</dbReference>
<dbReference type="GO" id="GO:0003723">
    <property type="term" value="F:RNA binding"/>
    <property type="evidence" value="ECO:0007669"/>
    <property type="project" value="UniProtKB-KW"/>
</dbReference>
<dbReference type="GO" id="GO:0003968">
    <property type="term" value="F:RNA-directed RNA polymerase activity"/>
    <property type="evidence" value="ECO:0007669"/>
    <property type="project" value="UniProtKB-KW"/>
</dbReference>
<dbReference type="GO" id="GO:0006351">
    <property type="term" value="P:DNA-templated transcription"/>
    <property type="evidence" value="ECO:0007669"/>
    <property type="project" value="InterPro"/>
</dbReference>
<dbReference type="GO" id="GO:0019079">
    <property type="term" value="P:viral genome replication"/>
    <property type="evidence" value="ECO:0007669"/>
    <property type="project" value="InterPro"/>
</dbReference>
<dbReference type="Gene3D" id="1.10.357.80">
    <property type="match status" value="2"/>
</dbReference>
<dbReference type="Gene3D" id="1.20.120.1390">
    <property type="match status" value="1"/>
</dbReference>
<dbReference type="Gene3D" id="1.20.120.1400">
    <property type="match status" value="1"/>
</dbReference>
<dbReference type="Gene3D" id="3.30.70.2480">
    <property type="match status" value="1"/>
</dbReference>
<dbReference type="Gene3D" id="1.10.10.1990">
    <property type="entry name" value="Viral RNA-directed RNA polymerase, 4-helical domain"/>
    <property type="match status" value="1"/>
</dbReference>
<dbReference type="InterPro" id="IPR043502">
    <property type="entry name" value="DNA/RNA_pol_sf"/>
</dbReference>
<dbReference type="InterPro" id="IPR042032">
    <property type="entry name" value="RNA-dir_pol_4-hel_dom"/>
</dbReference>
<dbReference type="InterPro" id="IPR001795">
    <property type="entry name" value="RNA-dir_pol_luteovirus"/>
</dbReference>
<dbReference type="InterPro" id="IPR007097">
    <property type="entry name" value="RNA-dir_pol_reovirus"/>
</dbReference>
<dbReference type="InterPro" id="IPR022071">
    <property type="entry name" value="Rotavirus_VP1_C"/>
</dbReference>
<dbReference type="Pfam" id="PF02123">
    <property type="entry name" value="RdRP_4"/>
    <property type="match status" value="1"/>
</dbReference>
<dbReference type="Pfam" id="PF12289">
    <property type="entry name" value="Rotavirus_VP1"/>
    <property type="match status" value="1"/>
</dbReference>
<dbReference type="SUPFAM" id="SSF56672">
    <property type="entry name" value="DNA/RNA polymerases"/>
    <property type="match status" value="1"/>
</dbReference>
<dbReference type="PROSITE" id="PS50523">
    <property type="entry name" value="RDRP_DSRNA_REO"/>
    <property type="match status" value="1"/>
</dbReference>
<name>RDRP_ROTPC</name>
<reference key="1">
    <citation type="journal article" date="1992" name="Virology">
        <title>Sequences of the four larger proteins of a porcine group C rotavirus and comparison with the equivalent group A rotavirus proteins.</title>
        <authorList>
            <person name="Bremont M."/>
            <person name="Juste-Lesage P."/>
            <person name="Chabanne-Vautherot D."/>
            <person name="Charpilienne A."/>
            <person name="Cohen J."/>
        </authorList>
    </citation>
    <scope>NUCLEOTIDE SEQUENCE [GENOMIC DNA]</scope>
</reference>
<organism>
    <name type="scientific">Rotavirus C (strain RVC/Pig/United States/Cowden/1980)</name>
    <name type="common">RV-C</name>
    <dbReference type="NCBI Taxonomy" id="10916"/>
    <lineage>
        <taxon>Viruses</taxon>
        <taxon>Riboviria</taxon>
        <taxon>Orthornavirae</taxon>
        <taxon>Duplornaviricota</taxon>
        <taxon>Resentoviricetes</taxon>
        <taxon>Reovirales</taxon>
        <taxon>Sedoreoviridae</taxon>
        <taxon>Rotavirus</taxon>
        <taxon>Rotavirus C</taxon>
    </lineage>
</organism>
<organismHost>
    <name type="scientific">Sus scrofa</name>
    <name type="common">Pig</name>
    <dbReference type="NCBI Taxonomy" id="9823"/>
</organismHost>
<proteinExistence type="inferred from homology"/>
<sequence>MDYDTLASKYLKFVYDFEDVTYQNNYFVTDEYKSDLEQYLKSIHDGEKISQSKIDSMETALLTKVPKEKRCLISKLVFAYGKHGNVENKLLKYGTKDALTHAIQKDVKPYENNIITSEIFKDESEYTDTYMDPAINTSCQSNCQAMMFTISEMKLTDIKNATRLEKLFTIVAATINKYGMPRHNIRYRYEWETMKDKPYHLAAWINSSIEMIACVVDHHTYMIARELIVKSFTNRTSLAKLVSSPMTVLTAMLPIRGTVITTENLELEYSSKSVNYLISEEMAEDFMKAIEQLRDEGLEIYQDYYEKWFKSPDPLTFPNIALIYSFSFHVGYRKQALSDAVYDQITVTYDDNVNMEMYKEYSERIENEIFTILKDKVVHEDKRLEEYELSALLSMSSASNGVLREIDFGGQKVRSTKKNMHVIDDMYHKRYTTDIPPVDERNPIPLGRRDVPGRRTRAIFILPYQYFIAQHSFAEMMLKYAKREREYSEFYSQANQVLSYGDVTRYLDSNSILCFTDVSQWDASQHNTRVLRRSIIRAMERLKQLTHNTNIHKAIDIYIQSQKNLENSYVLIDKKAIQYGATASGEKQTKIMNSIANKALIQTVLGKLMTDYTFDVKMIRVDGDDNYAIVRFPTAITEKLLSEFTSKLRSYYSEMNVKVKALASLTGCEIAKRYIAGGMLFFRAGVNILNHEKRNQDSAYDMAATLYANYIVNALRGLTMSRTFILVKICQMTSIKITGTLRLFPMKSILALNSTFKVFDEVDYVINYPISELFIQLQRKLSSIKAKSKIADNIAKSPQFKSYVEFLNKSLTADENPIVSDGIKLTEKAKLNSYAPIALEKRRDQFNMMVSFLQNPTTFKSETVVTINDVLYFISGFIKINSSVALPKEENNTMPLLPVTIKRTLNYFGLRTHDYDIKGSSSTMSKIIKQYSVYTPGIEELYEVVNKSIDSIRGYFASFNVPKADVDTYISTQMYKHDRFKILQAYIYNLLSVNYGMYQLVDLNSAKFFDHVIHTPMAKTPTAVFMIDLALRLKVINHCIEKGEVITVSVHANKTDYLKLWRMLWNVKTMNSPYSKNSMFDE</sequence>